<accession>B4SL82</accession>
<proteinExistence type="inferred from homology"/>
<keyword id="KW-0963">Cytoplasm</keyword>
<keyword id="KW-0489">Methyltransferase</keyword>
<keyword id="KW-0949">S-adenosyl-L-methionine</keyword>
<keyword id="KW-0808">Transferase</keyword>
<feature type="chain" id="PRO_1000132830" description="Ribosomal protein L11 methyltransferase">
    <location>
        <begin position="1"/>
        <end position="306"/>
    </location>
</feature>
<feature type="binding site" evidence="1">
    <location>
        <position position="154"/>
    </location>
    <ligand>
        <name>S-adenosyl-L-methionine</name>
        <dbReference type="ChEBI" id="CHEBI:59789"/>
    </ligand>
</feature>
<feature type="binding site" evidence="1">
    <location>
        <position position="179"/>
    </location>
    <ligand>
        <name>S-adenosyl-L-methionine</name>
        <dbReference type="ChEBI" id="CHEBI:59789"/>
    </ligand>
</feature>
<feature type="binding site" evidence="1">
    <location>
        <position position="201"/>
    </location>
    <ligand>
        <name>S-adenosyl-L-methionine</name>
        <dbReference type="ChEBI" id="CHEBI:59789"/>
    </ligand>
</feature>
<feature type="binding site" evidence="1">
    <location>
        <position position="242"/>
    </location>
    <ligand>
        <name>S-adenosyl-L-methionine</name>
        <dbReference type="ChEBI" id="CHEBI:59789"/>
    </ligand>
</feature>
<name>PRMA_STRM5</name>
<gene>
    <name evidence="1" type="primary">prmA</name>
    <name type="ordered locus">Smal_3652</name>
</gene>
<comment type="function">
    <text evidence="1">Methylates ribosomal protein L11.</text>
</comment>
<comment type="catalytic activity">
    <reaction evidence="1">
        <text>L-lysyl-[protein] + 3 S-adenosyl-L-methionine = N(6),N(6),N(6)-trimethyl-L-lysyl-[protein] + 3 S-adenosyl-L-homocysteine + 3 H(+)</text>
        <dbReference type="Rhea" id="RHEA:54192"/>
        <dbReference type="Rhea" id="RHEA-COMP:9752"/>
        <dbReference type="Rhea" id="RHEA-COMP:13826"/>
        <dbReference type="ChEBI" id="CHEBI:15378"/>
        <dbReference type="ChEBI" id="CHEBI:29969"/>
        <dbReference type="ChEBI" id="CHEBI:57856"/>
        <dbReference type="ChEBI" id="CHEBI:59789"/>
        <dbReference type="ChEBI" id="CHEBI:61961"/>
    </reaction>
</comment>
<comment type="subcellular location">
    <subcellularLocation>
        <location evidence="1">Cytoplasm</location>
    </subcellularLocation>
</comment>
<comment type="similarity">
    <text evidence="1">Belongs to the methyltransferase superfamily. PrmA family.</text>
</comment>
<dbReference type="EC" id="2.1.1.-" evidence="1"/>
<dbReference type="EMBL" id="CP001111">
    <property type="protein sequence ID" value="ACF53351.1"/>
    <property type="molecule type" value="Genomic_DNA"/>
</dbReference>
<dbReference type="RefSeq" id="WP_012512271.1">
    <property type="nucleotide sequence ID" value="NC_011071.1"/>
</dbReference>
<dbReference type="SMR" id="B4SL82"/>
<dbReference type="STRING" id="391008.Smal_3652"/>
<dbReference type="KEGG" id="smt:Smal_3652"/>
<dbReference type="eggNOG" id="COG2264">
    <property type="taxonomic scope" value="Bacteria"/>
</dbReference>
<dbReference type="HOGENOM" id="CLU_049382_4_1_6"/>
<dbReference type="OrthoDB" id="9785995at2"/>
<dbReference type="Proteomes" id="UP000001867">
    <property type="component" value="Chromosome"/>
</dbReference>
<dbReference type="GO" id="GO:0005829">
    <property type="term" value="C:cytosol"/>
    <property type="evidence" value="ECO:0007669"/>
    <property type="project" value="TreeGrafter"/>
</dbReference>
<dbReference type="GO" id="GO:0016279">
    <property type="term" value="F:protein-lysine N-methyltransferase activity"/>
    <property type="evidence" value="ECO:0007669"/>
    <property type="project" value="TreeGrafter"/>
</dbReference>
<dbReference type="GO" id="GO:0032259">
    <property type="term" value="P:methylation"/>
    <property type="evidence" value="ECO:0007669"/>
    <property type="project" value="UniProtKB-KW"/>
</dbReference>
<dbReference type="Gene3D" id="3.40.50.150">
    <property type="entry name" value="Vaccinia Virus protein VP39"/>
    <property type="match status" value="1"/>
</dbReference>
<dbReference type="HAMAP" id="MF_00735">
    <property type="entry name" value="Methyltr_PrmA"/>
    <property type="match status" value="1"/>
</dbReference>
<dbReference type="InterPro" id="IPR050078">
    <property type="entry name" value="Ribosomal_L11_MeTrfase_PrmA"/>
</dbReference>
<dbReference type="InterPro" id="IPR004498">
    <property type="entry name" value="Ribosomal_PrmA_MeTrfase"/>
</dbReference>
<dbReference type="InterPro" id="IPR029063">
    <property type="entry name" value="SAM-dependent_MTases_sf"/>
</dbReference>
<dbReference type="NCBIfam" id="TIGR00406">
    <property type="entry name" value="prmA"/>
    <property type="match status" value="1"/>
</dbReference>
<dbReference type="PANTHER" id="PTHR43648">
    <property type="entry name" value="ELECTRON TRANSFER FLAVOPROTEIN BETA SUBUNIT LYSINE METHYLTRANSFERASE"/>
    <property type="match status" value="1"/>
</dbReference>
<dbReference type="PANTHER" id="PTHR43648:SF1">
    <property type="entry name" value="ELECTRON TRANSFER FLAVOPROTEIN BETA SUBUNIT LYSINE METHYLTRANSFERASE"/>
    <property type="match status" value="1"/>
</dbReference>
<dbReference type="Pfam" id="PF06325">
    <property type="entry name" value="PrmA"/>
    <property type="match status" value="1"/>
</dbReference>
<dbReference type="PIRSF" id="PIRSF000401">
    <property type="entry name" value="RPL11_MTase"/>
    <property type="match status" value="1"/>
</dbReference>
<dbReference type="SUPFAM" id="SSF53335">
    <property type="entry name" value="S-adenosyl-L-methionine-dependent methyltransferases"/>
    <property type="match status" value="1"/>
</dbReference>
<protein>
    <recommendedName>
        <fullName evidence="1">Ribosomal protein L11 methyltransferase</fullName>
        <shortName evidence="1">L11 Mtase</shortName>
        <ecNumber evidence="1">2.1.1.-</ecNumber>
    </recommendedName>
</protein>
<sequence>MPFLELTLRCTEATQPRYENALEDVGALAVTLLDAEADTSNEQAILEPGVGETPLWDTLVLSALFPADSNALLLLAALEAFDPELDWSGGSFRAVEDEDWERAWLDQFQPMDFGSRTWIVPWNHELPEAAQAADAAVVRLDPGLAFGSGTHPTTALCLRWLDQLAVDGLLQGQRVLDFGCGSGILALAALKLGAAEAIGVDNDPQALVATADNAERNGEQARMHVYLPQDEPVATYPVVVANILASALDALAELLAARVAAGGRIALSGILHGQEGELLQRYAPWFDDLQATQDGDWMRITGVRRA</sequence>
<reference key="1">
    <citation type="submission" date="2008-06" db="EMBL/GenBank/DDBJ databases">
        <title>Complete sequence of Stenotrophomonas maltophilia R551-3.</title>
        <authorList>
            <consortium name="US DOE Joint Genome Institute"/>
            <person name="Lucas S."/>
            <person name="Copeland A."/>
            <person name="Lapidus A."/>
            <person name="Glavina del Rio T."/>
            <person name="Dalin E."/>
            <person name="Tice H."/>
            <person name="Pitluck S."/>
            <person name="Chain P."/>
            <person name="Malfatti S."/>
            <person name="Shin M."/>
            <person name="Vergez L."/>
            <person name="Lang D."/>
            <person name="Schmutz J."/>
            <person name="Larimer F."/>
            <person name="Land M."/>
            <person name="Hauser L."/>
            <person name="Kyrpides N."/>
            <person name="Mikhailova N."/>
            <person name="Taghavi S."/>
            <person name="Monchy S."/>
            <person name="Newman L."/>
            <person name="Vangronsveld J."/>
            <person name="van der Lelie D."/>
            <person name="Richardson P."/>
        </authorList>
    </citation>
    <scope>NUCLEOTIDE SEQUENCE [LARGE SCALE GENOMIC DNA]</scope>
    <source>
        <strain>R551-3</strain>
    </source>
</reference>
<evidence type="ECO:0000255" key="1">
    <source>
        <dbReference type="HAMAP-Rule" id="MF_00735"/>
    </source>
</evidence>
<organism>
    <name type="scientific">Stenotrophomonas maltophilia (strain R551-3)</name>
    <dbReference type="NCBI Taxonomy" id="391008"/>
    <lineage>
        <taxon>Bacteria</taxon>
        <taxon>Pseudomonadati</taxon>
        <taxon>Pseudomonadota</taxon>
        <taxon>Gammaproteobacteria</taxon>
        <taxon>Lysobacterales</taxon>
        <taxon>Lysobacteraceae</taxon>
        <taxon>Stenotrophomonas</taxon>
        <taxon>Stenotrophomonas maltophilia group</taxon>
    </lineage>
</organism>